<evidence type="ECO:0000250" key="1"/>
<evidence type="ECO:0000256" key="2">
    <source>
        <dbReference type="SAM" id="MobiDB-lite"/>
    </source>
</evidence>
<evidence type="ECO:0000305" key="3"/>
<keyword id="KW-0963">Cytoplasm</keyword>
<keyword id="KW-0472">Membrane</keyword>
<keyword id="KW-0539">Nucleus</keyword>
<keyword id="KW-1185">Reference proteome</keyword>
<protein>
    <recommendedName>
        <fullName>Telomere length regulation protein TEL2 homolog</fullName>
    </recommendedName>
</protein>
<reference key="1">
    <citation type="journal article" date="2013" name="Nature">
        <title>The zebrafish reference genome sequence and its relationship to the human genome.</title>
        <authorList>
            <person name="Howe K."/>
            <person name="Clark M.D."/>
            <person name="Torroja C.F."/>
            <person name="Torrance J."/>
            <person name="Berthelot C."/>
            <person name="Muffato M."/>
            <person name="Collins J.E."/>
            <person name="Humphray S."/>
            <person name="McLaren K."/>
            <person name="Matthews L."/>
            <person name="McLaren S."/>
            <person name="Sealy I."/>
            <person name="Caccamo M."/>
            <person name="Churcher C."/>
            <person name="Scott C."/>
            <person name="Barrett J.C."/>
            <person name="Koch R."/>
            <person name="Rauch G.J."/>
            <person name="White S."/>
            <person name="Chow W."/>
            <person name="Kilian B."/>
            <person name="Quintais L.T."/>
            <person name="Guerra-Assuncao J.A."/>
            <person name="Zhou Y."/>
            <person name="Gu Y."/>
            <person name="Yen J."/>
            <person name="Vogel J.H."/>
            <person name="Eyre T."/>
            <person name="Redmond S."/>
            <person name="Banerjee R."/>
            <person name="Chi J."/>
            <person name="Fu B."/>
            <person name="Langley E."/>
            <person name="Maguire S.F."/>
            <person name="Laird G.K."/>
            <person name="Lloyd D."/>
            <person name="Kenyon E."/>
            <person name="Donaldson S."/>
            <person name="Sehra H."/>
            <person name="Almeida-King J."/>
            <person name="Loveland J."/>
            <person name="Trevanion S."/>
            <person name="Jones M."/>
            <person name="Quail M."/>
            <person name="Willey D."/>
            <person name="Hunt A."/>
            <person name="Burton J."/>
            <person name="Sims S."/>
            <person name="McLay K."/>
            <person name="Plumb B."/>
            <person name="Davis J."/>
            <person name="Clee C."/>
            <person name="Oliver K."/>
            <person name="Clark R."/>
            <person name="Riddle C."/>
            <person name="Elliot D."/>
            <person name="Threadgold G."/>
            <person name="Harden G."/>
            <person name="Ware D."/>
            <person name="Begum S."/>
            <person name="Mortimore B."/>
            <person name="Kerry G."/>
            <person name="Heath P."/>
            <person name="Phillimore B."/>
            <person name="Tracey A."/>
            <person name="Corby N."/>
            <person name="Dunn M."/>
            <person name="Johnson C."/>
            <person name="Wood J."/>
            <person name="Clark S."/>
            <person name="Pelan S."/>
            <person name="Griffiths G."/>
            <person name="Smith M."/>
            <person name="Glithero R."/>
            <person name="Howden P."/>
            <person name="Barker N."/>
            <person name="Lloyd C."/>
            <person name="Stevens C."/>
            <person name="Harley J."/>
            <person name="Holt K."/>
            <person name="Panagiotidis G."/>
            <person name="Lovell J."/>
            <person name="Beasley H."/>
            <person name="Henderson C."/>
            <person name="Gordon D."/>
            <person name="Auger K."/>
            <person name="Wright D."/>
            <person name="Collins J."/>
            <person name="Raisen C."/>
            <person name="Dyer L."/>
            <person name="Leung K."/>
            <person name="Robertson L."/>
            <person name="Ambridge K."/>
            <person name="Leongamornlert D."/>
            <person name="McGuire S."/>
            <person name="Gilderthorp R."/>
            <person name="Griffiths C."/>
            <person name="Manthravadi D."/>
            <person name="Nichol S."/>
            <person name="Barker G."/>
            <person name="Whitehead S."/>
            <person name="Kay M."/>
            <person name="Brown J."/>
            <person name="Murnane C."/>
            <person name="Gray E."/>
            <person name="Humphries M."/>
            <person name="Sycamore N."/>
            <person name="Barker D."/>
            <person name="Saunders D."/>
            <person name="Wallis J."/>
            <person name="Babbage A."/>
            <person name="Hammond S."/>
            <person name="Mashreghi-Mohammadi M."/>
            <person name="Barr L."/>
            <person name="Martin S."/>
            <person name="Wray P."/>
            <person name="Ellington A."/>
            <person name="Matthews N."/>
            <person name="Ellwood M."/>
            <person name="Woodmansey R."/>
            <person name="Clark G."/>
            <person name="Cooper J."/>
            <person name="Tromans A."/>
            <person name="Grafham D."/>
            <person name="Skuce C."/>
            <person name="Pandian R."/>
            <person name="Andrews R."/>
            <person name="Harrison E."/>
            <person name="Kimberley A."/>
            <person name="Garnett J."/>
            <person name="Fosker N."/>
            <person name="Hall R."/>
            <person name="Garner P."/>
            <person name="Kelly D."/>
            <person name="Bird C."/>
            <person name="Palmer S."/>
            <person name="Gehring I."/>
            <person name="Berger A."/>
            <person name="Dooley C.M."/>
            <person name="Ersan-Urun Z."/>
            <person name="Eser C."/>
            <person name="Geiger H."/>
            <person name="Geisler M."/>
            <person name="Karotki L."/>
            <person name="Kirn A."/>
            <person name="Konantz J."/>
            <person name="Konantz M."/>
            <person name="Oberlander M."/>
            <person name="Rudolph-Geiger S."/>
            <person name="Teucke M."/>
            <person name="Lanz C."/>
            <person name="Raddatz G."/>
            <person name="Osoegawa K."/>
            <person name="Zhu B."/>
            <person name="Rapp A."/>
            <person name="Widaa S."/>
            <person name="Langford C."/>
            <person name="Yang F."/>
            <person name="Schuster S.C."/>
            <person name="Carter N.P."/>
            <person name="Harrow J."/>
            <person name="Ning Z."/>
            <person name="Herrero J."/>
            <person name="Searle S.M."/>
            <person name="Enright A."/>
            <person name="Geisler R."/>
            <person name="Plasterk R.H."/>
            <person name="Lee C."/>
            <person name="Westerfield M."/>
            <person name="de Jong P.J."/>
            <person name="Zon L.I."/>
            <person name="Postlethwait J.H."/>
            <person name="Nusslein-Volhard C."/>
            <person name="Hubbard T.J."/>
            <person name="Roest Crollius H."/>
            <person name="Rogers J."/>
            <person name="Stemple D.L."/>
        </authorList>
    </citation>
    <scope>NUCLEOTIDE SEQUENCE [LARGE SCALE GENOMIC DNA]</scope>
    <source>
        <strain>Tuebingen</strain>
    </source>
</reference>
<reference key="2">
    <citation type="submission" date="2006-10" db="EMBL/GenBank/DDBJ databases">
        <authorList>
            <consortium name="NIH - Zebrafish Gene Collection (ZGC) project"/>
        </authorList>
    </citation>
    <scope>NUCLEOTIDE SEQUENCE [LARGE SCALE MRNA]</scope>
    <source>
        <strain>WIK</strain>
        <tissue>Ovary</tissue>
    </source>
</reference>
<gene>
    <name type="primary">telo2</name>
    <name type="ORF">si:ch211-153c20.2</name>
    <name type="ORF">zgc:153824</name>
</gene>
<name>TELO2_DANRE</name>
<dbReference type="EMBL" id="AL772148">
    <property type="protein sequence ID" value="CAE30387.1"/>
    <property type="status" value="ALT_SEQ"/>
    <property type="molecule type" value="Genomic_DNA"/>
</dbReference>
<dbReference type="EMBL" id="BC125895">
    <property type="protein sequence ID" value="AAI25896.1"/>
    <property type="molecule type" value="mRNA"/>
</dbReference>
<dbReference type="RefSeq" id="NP_001071209.1">
    <property type="nucleotide sequence ID" value="NM_001077741.1"/>
</dbReference>
<dbReference type="SMR" id="Q7T006"/>
<dbReference type="FunCoup" id="Q7T006">
    <property type="interactions" value="1684"/>
</dbReference>
<dbReference type="STRING" id="7955.ENSDARP00000114983"/>
<dbReference type="PaxDb" id="7955-ENSDARP00000114983"/>
<dbReference type="GeneID" id="777634"/>
<dbReference type="KEGG" id="dre:777634"/>
<dbReference type="AGR" id="ZFIN:ZDB-GENE-061103-523"/>
<dbReference type="CTD" id="9894"/>
<dbReference type="ZFIN" id="ZDB-GENE-061103-523">
    <property type="gene designation" value="telo2"/>
</dbReference>
<dbReference type="eggNOG" id="KOG4346">
    <property type="taxonomic scope" value="Eukaryota"/>
</dbReference>
<dbReference type="InParanoid" id="Q7T006"/>
<dbReference type="OrthoDB" id="10258062at2759"/>
<dbReference type="PhylomeDB" id="Q7T006"/>
<dbReference type="TreeFam" id="TF313925"/>
<dbReference type="PRO" id="PR:Q7T006"/>
<dbReference type="Proteomes" id="UP000000437">
    <property type="component" value="Alternate scaffold 24"/>
</dbReference>
<dbReference type="Proteomes" id="UP000000437">
    <property type="component" value="Chromosome 24"/>
</dbReference>
<dbReference type="GO" id="GO:0005829">
    <property type="term" value="C:cytosol"/>
    <property type="evidence" value="ECO:0000318"/>
    <property type="project" value="GO_Central"/>
</dbReference>
<dbReference type="GO" id="GO:0016020">
    <property type="term" value="C:membrane"/>
    <property type="evidence" value="ECO:0007669"/>
    <property type="project" value="UniProtKB-SubCell"/>
</dbReference>
<dbReference type="GO" id="GO:0005634">
    <property type="term" value="C:nucleus"/>
    <property type="evidence" value="ECO:0007669"/>
    <property type="project" value="UniProtKB-SubCell"/>
</dbReference>
<dbReference type="GO" id="GO:0051879">
    <property type="term" value="F:Hsp90 protein binding"/>
    <property type="evidence" value="ECO:0000318"/>
    <property type="project" value="GO_Central"/>
</dbReference>
<dbReference type="GO" id="GO:0042162">
    <property type="term" value="F:telomeric DNA binding"/>
    <property type="evidence" value="ECO:0000318"/>
    <property type="project" value="GO_Central"/>
</dbReference>
<dbReference type="GO" id="GO:0051083">
    <property type="term" value="P:'de novo' cotranslational protein folding"/>
    <property type="evidence" value="ECO:0000318"/>
    <property type="project" value="GO_Central"/>
</dbReference>
<dbReference type="GO" id="GO:0097421">
    <property type="term" value="P:liver regeneration"/>
    <property type="evidence" value="ECO:0000315"/>
    <property type="project" value="ZFIN"/>
</dbReference>
<dbReference type="FunFam" id="1.25.40.720:FF:000001">
    <property type="entry name" value="Telomere length regulation protein TEL2"/>
    <property type="match status" value="1"/>
</dbReference>
<dbReference type="FunFam" id="1.25.40.720:FF:000003">
    <property type="entry name" value="Telomere length regulation protein TEL2 homolog"/>
    <property type="match status" value="1"/>
</dbReference>
<dbReference type="Gene3D" id="1.25.40.720">
    <property type="entry name" value="Telomere length regulation protein 2, C-terminal domain"/>
    <property type="match status" value="2"/>
</dbReference>
<dbReference type="InterPro" id="IPR038528">
    <property type="entry name" value="TEL2_C_sf"/>
</dbReference>
<dbReference type="InterPro" id="IPR051970">
    <property type="entry name" value="TEL2_Regulation"/>
</dbReference>
<dbReference type="InterPro" id="IPR019337">
    <property type="entry name" value="Telomere_length_regulation_dom"/>
</dbReference>
<dbReference type="PANTHER" id="PTHR15830">
    <property type="entry name" value="TELOMERE LENGTH REGULATION PROTEIN TEL2 FAMILY MEMBER"/>
    <property type="match status" value="1"/>
</dbReference>
<dbReference type="PANTHER" id="PTHR15830:SF10">
    <property type="entry name" value="TELOMERE LENGTH REGULATION PROTEIN TEL2 HOMOLOG"/>
    <property type="match status" value="1"/>
</dbReference>
<dbReference type="Pfam" id="PF25320">
    <property type="entry name" value="TELO2_ARM"/>
    <property type="match status" value="1"/>
</dbReference>
<dbReference type="Pfam" id="PF10193">
    <property type="entry name" value="Telomere_reg-2"/>
    <property type="match status" value="1"/>
</dbReference>
<accession>Q7T006</accession>
<accession>A0JMI8</accession>
<feature type="chain" id="PRO_0000318517" description="Telomere length regulation protein TEL2 homolog">
    <location>
        <begin position="1"/>
        <end position="822"/>
    </location>
</feature>
<feature type="region of interest" description="Disordered" evidence="2">
    <location>
        <begin position="442"/>
        <end position="504"/>
    </location>
</feature>
<feature type="compositionally biased region" description="Polar residues" evidence="2">
    <location>
        <begin position="465"/>
        <end position="477"/>
    </location>
</feature>
<feature type="compositionally biased region" description="Acidic residues" evidence="2">
    <location>
        <begin position="480"/>
        <end position="489"/>
    </location>
</feature>
<feature type="sequence conflict" description="In Ref. 2; AAI25896." evidence="3" ref="2">
    <original>K</original>
    <variation>R</variation>
    <location>
        <position position="19"/>
    </location>
</feature>
<feature type="sequence conflict" description="In Ref. 2; AAI25896." evidence="3" ref="2">
    <original>VS</original>
    <variation>AG</variation>
    <location>
        <begin position="137"/>
        <end position="138"/>
    </location>
</feature>
<feature type="sequence conflict" description="In Ref. 2; AAI25896." evidence="3" ref="2">
    <original>A</original>
    <variation>S</variation>
    <location>
        <position position="142"/>
    </location>
</feature>
<feature type="sequence conflict" description="In Ref. 2; AAI25896." evidence="3" ref="2">
    <original>F</original>
    <variation>S</variation>
    <location>
        <position position="235"/>
    </location>
</feature>
<feature type="sequence conflict" description="In Ref. 2; AAI25896." evidence="3" ref="2">
    <original>M</original>
    <variation>L</variation>
    <location>
        <position position="251"/>
    </location>
</feature>
<feature type="sequence conflict" description="In Ref. 2; AAI25896." evidence="3" ref="2">
    <original>N</original>
    <variation>H</variation>
    <location>
        <position position="453"/>
    </location>
</feature>
<feature type="sequence conflict" description="In Ref. 2; AAI25896." evidence="3" ref="2">
    <original>PVS</original>
    <variation>SVL</variation>
    <location>
        <begin position="464"/>
        <end position="466"/>
    </location>
</feature>
<feature type="sequence conflict" description="In Ref. 2; AAI25896." evidence="3" ref="2">
    <original>R</original>
    <variation>C</variation>
    <location>
        <position position="506"/>
    </location>
</feature>
<feature type="sequence conflict" description="In Ref. 2; AAI25896." evidence="3" ref="2">
    <original>V</original>
    <variation>L</variation>
    <location>
        <position position="539"/>
    </location>
</feature>
<feature type="sequence conflict" description="In Ref. 2; AAI25896." evidence="3" ref="2">
    <original>V</original>
    <variation>L</variation>
    <location>
        <position position="620"/>
    </location>
</feature>
<feature type="sequence conflict" description="In Ref. 2; AAI25896." evidence="3" ref="2">
    <original>F</original>
    <variation>L</variation>
    <location>
        <position position="687"/>
    </location>
</feature>
<sequence length="822" mass="91669">MGTFGTESPLRLQVSSCLKTLSTSRDSGEIVHALRTLMRCLDDGEFTRIHHTHALQVLVSAQSSHWFSRSHDEDEEEMKKLWGEIIIRGPAEQTLLTLLDTISSTGESEALDRCVSALEMFLSAARLQVLLWSRCEVSGASADSPQLTETVIGHLAALPSITSNHLHTNTPDIFLPQQYYPLLAASILDTLEKTCHALRAGRDCSLGFVSQVLGKVCIQGYSSQMFETLGPRLSFVTREDALYQRVTQKLMENVPERCTESVITGLIRSLSGAAAVSRLMGNLVLTNKKAQFVLTHKLILQQYQHPTRLLKSVLGYLAVDSSRRPLLKQVLRSVCQVWCNSSAVKHTCVEQQLYVSKALLLCVALLDDSEIQELRQEMLQCMLGGVQCRLDSNVERIRRMGMVVGECLSHRLDTPGSQLKFQYGADEEIGELKSLMESLAVNDDEEEQPDASNSLQPEPKVEAPVSSQSVASDPGNGSESELDSDDDLTPYDMSADQEKKKSAPPRYVRDCLEGLMSSDDAERFELSLQVAETLLRKNVKATQEVSVQFSKVLLHLEDRYNTALFLSLRQNAMVALTVTDIKPVVDYWTTEFYALNYSLRQRLDILEVLALAAQELSEPVTNKHTGAEPITAVTPLGQSDDITHWRQIVDKRIQSKTRRISKGVTQPVKAVPNRYAPVAGFFFFPLFRSYDRPQTTFDLLGGDHLVLGRLLHTLGLLMHLAVNAPVVSQMGRALLDFVWAVRFHTDQMVRRGVMFAVCAVFLSMPSENLLTELGDDLMETRAWLADVAESDCDSDCRSLAVQSLMLMDKNLKSQLQIPDMET</sequence>
<comment type="function">
    <text evidence="1">Regulator of the DNA damage response (DDR). Part of the TTT complex that is required to stabilize protein levels of the phosphatidylinositol 3-kinase-related protein kinase (PIKK) family proteins. Promotes assembly, stabilizes and maintains the activity of TORC complexes, which regulate cell growth and survival in response to nutrient and hormonal signals. May be involved in telomere length regulation (By similarity).</text>
</comment>
<comment type="subcellular location">
    <subcellularLocation>
        <location evidence="1">Cytoplasm</location>
    </subcellularLocation>
    <subcellularLocation>
        <location evidence="1">Membrane</location>
    </subcellularLocation>
    <subcellularLocation>
        <location evidence="1">Nucleus</location>
    </subcellularLocation>
</comment>
<comment type="similarity">
    <text evidence="3">Belongs to the TEL2 family.</text>
</comment>
<comment type="sequence caution" evidence="3">
    <conflict type="erroneous gene model prediction">
        <sequence resource="EMBL-CDS" id="CAE30387"/>
    </conflict>
</comment>
<organism>
    <name type="scientific">Danio rerio</name>
    <name type="common">Zebrafish</name>
    <name type="synonym">Brachydanio rerio</name>
    <dbReference type="NCBI Taxonomy" id="7955"/>
    <lineage>
        <taxon>Eukaryota</taxon>
        <taxon>Metazoa</taxon>
        <taxon>Chordata</taxon>
        <taxon>Craniata</taxon>
        <taxon>Vertebrata</taxon>
        <taxon>Euteleostomi</taxon>
        <taxon>Actinopterygii</taxon>
        <taxon>Neopterygii</taxon>
        <taxon>Teleostei</taxon>
        <taxon>Ostariophysi</taxon>
        <taxon>Cypriniformes</taxon>
        <taxon>Danionidae</taxon>
        <taxon>Danioninae</taxon>
        <taxon>Danio</taxon>
    </lineage>
</organism>
<proteinExistence type="evidence at transcript level"/>